<proteinExistence type="inferred from homology"/>
<accession>P63970</accession>
<accession>Q99TR8</accession>
<feature type="chain" id="PRO_0000070883" description="Chaperone protein DnaJ">
    <location>
        <begin position="1"/>
        <end position="379"/>
    </location>
</feature>
<feature type="domain" description="J" evidence="1">
    <location>
        <begin position="5"/>
        <end position="69"/>
    </location>
</feature>
<feature type="repeat" description="CXXCXGXG motif">
    <location>
        <begin position="149"/>
        <end position="156"/>
    </location>
</feature>
<feature type="repeat" description="CXXCXGXG motif">
    <location>
        <begin position="166"/>
        <end position="173"/>
    </location>
</feature>
<feature type="repeat" description="CXXCXGXG motif">
    <location>
        <begin position="192"/>
        <end position="199"/>
    </location>
</feature>
<feature type="repeat" description="CXXCXGXG motif">
    <location>
        <begin position="206"/>
        <end position="213"/>
    </location>
</feature>
<feature type="zinc finger region" description="CR-type" evidence="1">
    <location>
        <begin position="136"/>
        <end position="218"/>
    </location>
</feature>
<feature type="binding site" evidence="1">
    <location>
        <position position="149"/>
    </location>
    <ligand>
        <name>Zn(2+)</name>
        <dbReference type="ChEBI" id="CHEBI:29105"/>
        <label>1</label>
    </ligand>
</feature>
<feature type="binding site" evidence="1">
    <location>
        <position position="152"/>
    </location>
    <ligand>
        <name>Zn(2+)</name>
        <dbReference type="ChEBI" id="CHEBI:29105"/>
        <label>1</label>
    </ligand>
</feature>
<feature type="binding site" evidence="1">
    <location>
        <position position="166"/>
    </location>
    <ligand>
        <name>Zn(2+)</name>
        <dbReference type="ChEBI" id="CHEBI:29105"/>
        <label>2</label>
    </ligand>
</feature>
<feature type="binding site" evidence="1">
    <location>
        <position position="169"/>
    </location>
    <ligand>
        <name>Zn(2+)</name>
        <dbReference type="ChEBI" id="CHEBI:29105"/>
        <label>2</label>
    </ligand>
</feature>
<feature type="binding site" evidence="1">
    <location>
        <position position="192"/>
    </location>
    <ligand>
        <name>Zn(2+)</name>
        <dbReference type="ChEBI" id="CHEBI:29105"/>
        <label>2</label>
    </ligand>
</feature>
<feature type="binding site" evidence="1">
    <location>
        <position position="195"/>
    </location>
    <ligand>
        <name>Zn(2+)</name>
        <dbReference type="ChEBI" id="CHEBI:29105"/>
        <label>2</label>
    </ligand>
</feature>
<feature type="binding site" evidence="1">
    <location>
        <position position="206"/>
    </location>
    <ligand>
        <name>Zn(2+)</name>
        <dbReference type="ChEBI" id="CHEBI:29105"/>
        <label>1</label>
    </ligand>
</feature>
<feature type="binding site" evidence="1">
    <location>
        <position position="209"/>
    </location>
    <ligand>
        <name>Zn(2+)</name>
        <dbReference type="ChEBI" id="CHEBI:29105"/>
        <label>1</label>
    </ligand>
</feature>
<reference key="1">
    <citation type="journal article" date="2001" name="Lancet">
        <title>Whole genome sequencing of meticillin-resistant Staphylococcus aureus.</title>
        <authorList>
            <person name="Kuroda M."/>
            <person name="Ohta T."/>
            <person name="Uchiyama I."/>
            <person name="Baba T."/>
            <person name="Yuzawa H."/>
            <person name="Kobayashi I."/>
            <person name="Cui L."/>
            <person name="Oguchi A."/>
            <person name="Aoki K."/>
            <person name="Nagai Y."/>
            <person name="Lian J.-Q."/>
            <person name="Ito T."/>
            <person name="Kanamori M."/>
            <person name="Matsumaru H."/>
            <person name="Maruyama A."/>
            <person name="Murakami H."/>
            <person name="Hosoyama A."/>
            <person name="Mizutani-Ui Y."/>
            <person name="Takahashi N.K."/>
            <person name="Sawano T."/>
            <person name="Inoue R."/>
            <person name="Kaito C."/>
            <person name="Sekimizu K."/>
            <person name="Hirakawa H."/>
            <person name="Kuhara S."/>
            <person name="Goto S."/>
            <person name="Yabuzaki J."/>
            <person name="Kanehisa M."/>
            <person name="Yamashita A."/>
            <person name="Oshima K."/>
            <person name="Furuya K."/>
            <person name="Yoshino C."/>
            <person name="Shiba T."/>
            <person name="Hattori M."/>
            <person name="Ogasawara N."/>
            <person name="Hayashi H."/>
            <person name="Hiramatsu K."/>
        </authorList>
    </citation>
    <scope>NUCLEOTIDE SEQUENCE [LARGE SCALE GENOMIC DNA]</scope>
    <source>
        <strain>Mu50 / ATCC 700699</strain>
    </source>
</reference>
<comment type="function">
    <text evidence="1">Participates actively in the response to hyperosmotic and heat shock by preventing the aggregation of stress-denatured proteins and by disaggregating proteins, also in an autonomous, DnaK-independent fashion. Unfolded proteins bind initially to DnaJ; upon interaction with the DnaJ-bound protein, DnaK hydrolyzes its bound ATP, resulting in the formation of a stable complex. GrpE releases ADP from DnaK; ATP binding to DnaK triggers the release of the substrate protein, thus completing the reaction cycle. Several rounds of ATP-dependent interactions between DnaJ, DnaK and GrpE are required for fully efficient folding. Also involved, together with DnaK and GrpE, in the DNA replication of plasmids through activation of initiation proteins.</text>
</comment>
<comment type="cofactor">
    <cofactor evidence="1">
        <name>Zn(2+)</name>
        <dbReference type="ChEBI" id="CHEBI:29105"/>
    </cofactor>
    <text evidence="1">Binds 2 Zn(2+) ions per monomer.</text>
</comment>
<comment type="subunit">
    <text evidence="1">Homodimer.</text>
</comment>
<comment type="subcellular location">
    <subcellularLocation>
        <location evidence="1">Cytoplasm</location>
    </subcellularLocation>
</comment>
<comment type="domain">
    <text evidence="1">The J domain is necessary and sufficient to stimulate DnaK ATPase activity. Zinc center 1 plays an important role in the autonomous, DnaK-independent chaperone activity of DnaJ. Zinc center 2 is essential for interaction with DnaK and for DnaJ activity.</text>
</comment>
<comment type="similarity">
    <text evidence="1">Belongs to the DnaJ family.</text>
</comment>
<keyword id="KW-0143">Chaperone</keyword>
<keyword id="KW-0963">Cytoplasm</keyword>
<keyword id="KW-0235">DNA replication</keyword>
<keyword id="KW-0479">Metal-binding</keyword>
<keyword id="KW-0677">Repeat</keyword>
<keyword id="KW-0346">Stress response</keyword>
<keyword id="KW-0862">Zinc</keyword>
<keyword id="KW-0863">Zinc-finger</keyword>
<sequence>MAKRDYYEVLGISKDASKDEIKKAYRKLSKKYHPDINKEEGADEKFKEISEAYEVLSDDNKRASYDQFGHDGPQGFGGQGFNGSDFGGFSGFGGGGFEDIFSSFFGGGRQRDPNAPQKGDDLQYTMTLTFEEAVFGTTKEISIRKDVTCETCHGDGAKPGTSKKTCSYCNGAGHVAVEQNTILGRVRTEQVCPKCNGSGQEFEEACPTCHGKGTENKTVKLEVKVPEGVDNEQQIRLAGEGSPGVNGGPAGDLYVVFRVKPSETFKRDGDDIYYKLNVSFPQAALGDEIKIPTLNNEVMLTIPAGTQTGKQFRLKEKGIKNVHGYGYGDLYVDIKVVTPTKLTDRQKELMKEFAQLNGEEINEQPSNFKDRAKRFFKGE</sequence>
<organism>
    <name type="scientific">Staphylococcus aureus (strain Mu50 / ATCC 700699)</name>
    <dbReference type="NCBI Taxonomy" id="158878"/>
    <lineage>
        <taxon>Bacteria</taxon>
        <taxon>Bacillati</taxon>
        <taxon>Bacillota</taxon>
        <taxon>Bacilli</taxon>
        <taxon>Bacillales</taxon>
        <taxon>Staphylococcaceae</taxon>
        <taxon>Staphylococcus</taxon>
    </lineage>
</organism>
<evidence type="ECO:0000255" key="1">
    <source>
        <dbReference type="HAMAP-Rule" id="MF_01152"/>
    </source>
</evidence>
<protein>
    <recommendedName>
        <fullName evidence="1">Chaperone protein DnaJ</fullName>
    </recommendedName>
</protein>
<dbReference type="EMBL" id="BA000017">
    <property type="protein sequence ID" value="BAB57741.1"/>
    <property type="molecule type" value="Genomic_DNA"/>
</dbReference>
<dbReference type="RefSeq" id="WP_001119021.1">
    <property type="nucleotide sequence ID" value="NC_002758.2"/>
</dbReference>
<dbReference type="SMR" id="P63970"/>
<dbReference type="KEGG" id="sav:SAV1579"/>
<dbReference type="HOGENOM" id="CLU_017633_0_7_9"/>
<dbReference type="PhylomeDB" id="P63970"/>
<dbReference type="Proteomes" id="UP000002481">
    <property type="component" value="Chromosome"/>
</dbReference>
<dbReference type="GO" id="GO:0005737">
    <property type="term" value="C:cytoplasm"/>
    <property type="evidence" value="ECO:0007669"/>
    <property type="project" value="UniProtKB-SubCell"/>
</dbReference>
<dbReference type="GO" id="GO:0005524">
    <property type="term" value="F:ATP binding"/>
    <property type="evidence" value="ECO:0007669"/>
    <property type="project" value="InterPro"/>
</dbReference>
<dbReference type="GO" id="GO:0031072">
    <property type="term" value="F:heat shock protein binding"/>
    <property type="evidence" value="ECO:0007669"/>
    <property type="project" value="InterPro"/>
</dbReference>
<dbReference type="GO" id="GO:0051082">
    <property type="term" value="F:unfolded protein binding"/>
    <property type="evidence" value="ECO:0007669"/>
    <property type="project" value="UniProtKB-UniRule"/>
</dbReference>
<dbReference type="GO" id="GO:0008270">
    <property type="term" value="F:zinc ion binding"/>
    <property type="evidence" value="ECO:0007669"/>
    <property type="project" value="UniProtKB-UniRule"/>
</dbReference>
<dbReference type="GO" id="GO:0051085">
    <property type="term" value="P:chaperone cofactor-dependent protein refolding"/>
    <property type="evidence" value="ECO:0007669"/>
    <property type="project" value="TreeGrafter"/>
</dbReference>
<dbReference type="GO" id="GO:0006260">
    <property type="term" value="P:DNA replication"/>
    <property type="evidence" value="ECO:0007669"/>
    <property type="project" value="UniProtKB-KW"/>
</dbReference>
<dbReference type="GO" id="GO:0042026">
    <property type="term" value="P:protein refolding"/>
    <property type="evidence" value="ECO:0007669"/>
    <property type="project" value="TreeGrafter"/>
</dbReference>
<dbReference type="GO" id="GO:0009408">
    <property type="term" value="P:response to heat"/>
    <property type="evidence" value="ECO:0007669"/>
    <property type="project" value="InterPro"/>
</dbReference>
<dbReference type="CDD" id="cd06257">
    <property type="entry name" value="DnaJ"/>
    <property type="match status" value="1"/>
</dbReference>
<dbReference type="CDD" id="cd10747">
    <property type="entry name" value="DnaJ_C"/>
    <property type="match status" value="1"/>
</dbReference>
<dbReference type="CDD" id="cd10719">
    <property type="entry name" value="DnaJ_zf"/>
    <property type="match status" value="1"/>
</dbReference>
<dbReference type="FunFam" id="1.10.287.110:FF:000031">
    <property type="entry name" value="Molecular chaperone DnaJ"/>
    <property type="match status" value="1"/>
</dbReference>
<dbReference type="FunFam" id="2.10.230.10:FF:000002">
    <property type="entry name" value="Molecular chaperone DnaJ"/>
    <property type="match status" value="1"/>
</dbReference>
<dbReference type="FunFam" id="2.60.260.20:FF:000004">
    <property type="entry name" value="Molecular chaperone DnaJ"/>
    <property type="match status" value="1"/>
</dbReference>
<dbReference type="Gene3D" id="1.10.287.110">
    <property type="entry name" value="DnaJ domain"/>
    <property type="match status" value="1"/>
</dbReference>
<dbReference type="Gene3D" id="2.10.230.10">
    <property type="entry name" value="Heat shock protein DnaJ, cysteine-rich domain"/>
    <property type="match status" value="1"/>
</dbReference>
<dbReference type="Gene3D" id="2.60.260.20">
    <property type="entry name" value="Urease metallochaperone UreE, N-terminal domain"/>
    <property type="match status" value="2"/>
</dbReference>
<dbReference type="HAMAP" id="MF_01152">
    <property type="entry name" value="DnaJ"/>
    <property type="match status" value="1"/>
</dbReference>
<dbReference type="InterPro" id="IPR012724">
    <property type="entry name" value="DnaJ"/>
</dbReference>
<dbReference type="InterPro" id="IPR002939">
    <property type="entry name" value="DnaJ_C"/>
</dbReference>
<dbReference type="InterPro" id="IPR001623">
    <property type="entry name" value="DnaJ_domain"/>
</dbReference>
<dbReference type="InterPro" id="IPR018253">
    <property type="entry name" value="DnaJ_domain_CS"/>
</dbReference>
<dbReference type="InterPro" id="IPR008971">
    <property type="entry name" value="HSP40/DnaJ_pept-bd"/>
</dbReference>
<dbReference type="InterPro" id="IPR001305">
    <property type="entry name" value="HSP_DnaJ_Cys-rich_dom"/>
</dbReference>
<dbReference type="InterPro" id="IPR036410">
    <property type="entry name" value="HSP_DnaJ_Cys-rich_dom_sf"/>
</dbReference>
<dbReference type="InterPro" id="IPR036869">
    <property type="entry name" value="J_dom_sf"/>
</dbReference>
<dbReference type="NCBIfam" id="TIGR02349">
    <property type="entry name" value="DnaJ_bact"/>
    <property type="match status" value="1"/>
</dbReference>
<dbReference type="NCBIfam" id="NF008035">
    <property type="entry name" value="PRK10767.1"/>
    <property type="match status" value="1"/>
</dbReference>
<dbReference type="NCBIfam" id="NF010873">
    <property type="entry name" value="PRK14280.1"/>
    <property type="match status" value="1"/>
</dbReference>
<dbReference type="PANTHER" id="PTHR43096:SF48">
    <property type="entry name" value="CHAPERONE PROTEIN DNAJ"/>
    <property type="match status" value="1"/>
</dbReference>
<dbReference type="PANTHER" id="PTHR43096">
    <property type="entry name" value="DNAJ HOMOLOG 1, MITOCHONDRIAL-RELATED"/>
    <property type="match status" value="1"/>
</dbReference>
<dbReference type="Pfam" id="PF00226">
    <property type="entry name" value="DnaJ"/>
    <property type="match status" value="1"/>
</dbReference>
<dbReference type="Pfam" id="PF01556">
    <property type="entry name" value="DnaJ_C"/>
    <property type="match status" value="1"/>
</dbReference>
<dbReference type="Pfam" id="PF00684">
    <property type="entry name" value="DnaJ_CXXCXGXG"/>
    <property type="match status" value="1"/>
</dbReference>
<dbReference type="PRINTS" id="PR00625">
    <property type="entry name" value="JDOMAIN"/>
</dbReference>
<dbReference type="SMART" id="SM00271">
    <property type="entry name" value="DnaJ"/>
    <property type="match status" value="1"/>
</dbReference>
<dbReference type="SUPFAM" id="SSF46565">
    <property type="entry name" value="Chaperone J-domain"/>
    <property type="match status" value="1"/>
</dbReference>
<dbReference type="SUPFAM" id="SSF57938">
    <property type="entry name" value="DnaJ/Hsp40 cysteine-rich domain"/>
    <property type="match status" value="1"/>
</dbReference>
<dbReference type="SUPFAM" id="SSF49493">
    <property type="entry name" value="HSP40/DnaJ peptide-binding domain"/>
    <property type="match status" value="2"/>
</dbReference>
<dbReference type="PROSITE" id="PS00636">
    <property type="entry name" value="DNAJ_1"/>
    <property type="match status" value="1"/>
</dbReference>
<dbReference type="PROSITE" id="PS50076">
    <property type="entry name" value="DNAJ_2"/>
    <property type="match status" value="1"/>
</dbReference>
<dbReference type="PROSITE" id="PS51188">
    <property type="entry name" value="ZF_CR"/>
    <property type="match status" value="1"/>
</dbReference>
<gene>
    <name evidence="1" type="primary">dnaJ</name>
    <name type="ordered locus">SAV1579</name>
</gene>
<name>DNAJ_STAAM</name>